<keyword id="KW-1003">Cell membrane</keyword>
<keyword id="KW-0285">Flavoprotein</keyword>
<keyword id="KW-0288">FMN</keyword>
<keyword id="KW-0472">Membrane</keyword>
<keyword id="KW-0560">Oxidoreductase</keyword>
<keyword id="KW-0665">Pyrimidine biosynthesis</keyword>
<proteinExistence type="inferred from homology"/>
<comment type="function">
    <text evidence="1">Catalyzes the conversion of dihydroorotate to orotate with quinone as electron acceptor.</text>
</comment>
<comment type="catalytic activity">
    <reaction evidence="1">
        <text>(S)-dihydroorotate + a quinone = orotate + a quinol</text>
        <dbReference type="Rhea" id="RHEA:30187"/>
        <dbReference type="ChEBI" id="CHEBI:24646"/>
        <dbReference type="ChEBI" id="CHEBI:30839"/>
        <dbReference type="ChEBI" id="CHEBI:30864"/>
        <dbReference type="ChEBI" id="CHEBI:132124"/>
        <dbReference type="EC" id="1.3.5.2"/>
    </reaction>
</comment>
<comment type="cofactor">
    <cofactor evidence="1">
        <name>FMN</name>
        <dbReference type="ChEBI" id="CHEBI:58210"/>
    </cofactor>
    <text evidence="1">Binds 1 FMN per subunit.</text>
</comment>
<comment type="pathway">
    <text evidence="1">Pyrimidine metabolism; UMP biosynthesis via de novo pathway; orotate from (S)-dihydroorotate (quinone route): step 1/1.</text>
</comment>
<comment type="subunit">
    <text evidence="1">Monomer.</text>
</comment>
<comment type="subcellular location">
    <subcellularLocation>
        <location evidence="1">Cell membrane</location>
        <topology evidence="1">Peripheral membrane protein</topology>
    </subcellularLocation>
</comment>
<comment type="similarity">
    <text evidence="1">Belongs to the dihydroorotate dehydrogenase family. Type 2 subfamily.</text>
</comment>
<sequence>MYYPLVRKALFQLDPERAHELTFRQLKRVSGTPLEFLVRQSVPTKPVSCMGLSFKNPVGLAAGLDKDGECIDALGAMGFGFIEVGTVTPRPQVGNDKPRLFRIVEAEGLINRMGFNNHGVDNLIENVKKSHFGGILGINIGKNKDTPVEQGKEDYLICMDKIYPYAGYIAINISSPNTPGLRSLQYGEALDDLLAAIKDKQTELHQRHHKYVPVAVKIAPDLTEEELIQIADSLVRHNIDGVIATNTTLDRSLIQGLNYCEQAGGLSGRPLQLRSTEVIHRLSQELKGRLPIIGVGGIDSVTAAREKMAAGASLIQIYSGFIFRGPGLIKNIVTHI</sequence>
<feature type="chain" id="PRO_1000024248" description="Dihydroorotate dehydrogenase (quinone)">
    <location>
        <begin position="1"/>
        <end position="336"/>
    </location>
</feature>
<feature type="active site" description="Nucleophile" evidence="1">
    <location>
        <position position="175"/>
    </location>
</feature>
<feature type="binding site" evidence="1">
    <location>
        <begin position="62"/>
        <end position="66"/>
    </location>
    <ligand>
        <name>FMN</name>
        <dbReference type="ChEBI" id="CHEBI:58210"/>
    </ligand>
</feature>
<feature type="binding site" evidence="1">
    <location>
        <position position="66"/>
    </location>
    <ligand>
        <name>substrate</name>
    </ligand>
</feature>
<feature type="binding site" evidence="1">
    <location>
        <position position="86"/>
    </location>
    <ligand>
        <name>FMN</name>
        <dbReference type="ChEBI" id="CHEBI:58210"/>
    </ligand>
</feature>
<feature type="binding site" evidence="1">
    <location>
        <begin position="111"/>
        <end position="115"/>
    </location>
    <ligand>
        <name>substrate</name>
    </ligand>
</feature>
<feature type="binding site" evidence="1">
    <location>
        <position position="139"/>
    </location>
    <ligand>
        <name>FMN</name>
        <dbReference type="ChEBI" id="CHEBI:58210"/>
    </ligand>
</feature>
<feature type="binding site" evidence="1">
    <location>
        <position position="172"/>
    </location>
    <ligand>
        <name>FMN</name>
        <dbReference type="ChEBI" id="CHEBI:58210"/>
    </ligand>
</feature>
<feature type="binding site" evidence="1">
    <location>
        <position position="172"/>
    </location>
    <ligand>
        <name>substrate</name>
    </ligand>
</feature>
<feature type="binding site" evidence="1">
    <location>
        <position position="177"/>
    </location>
    <ligand>
        <name>substrate</name>
    </ligand>
</feature>
<feature type="binding site" evidence="1">
    <location>
        <position position="217"/>
    </location>
    <ligand>
        <name>FMN</name>
        <dbReference type="ChEBI" id="CHEBI:58210"/>
    </ligand>
</feature>
<feature type="binding site" evidence="1">
    <location>
        <position position="245"/>
    </location>
    <ligand>
        <name>FMN</name>
        <dbReference type="ChEBI" id="CHEBI:58210"/>
    </ligand>
</feature>
<feature type="binding site" evidence="1">
    <location>
        <begin position="246"/>
        <end position="247"/>
    </location>
    <ligand>
        <name>substrate</name>
    </ligand>
</feature>
<feature type="binding site" evidence="1">
    <location>
        <position position="268"/>
    </location>
    <ligand>
        <name>FMN</name>
        <dbReference type="ChEBI" id="CHEBI:58210"/>
    </ligand>
</feature>
<feature type="binding site" evidence="1">
    <location>
        <position position="297"/>
    </location>
    <ligand>
        <name>FMN</name>
        <dbReference type="ChEBI" id="CHEBI:58210"/>
    </ligand>
</feature>
<feature type="binding site" evidence="1">
    <location>
        <begin position="318"/>
        <end position="319"/>
    </location>
    <ligand>
        <name>FMN</name>
        <dbReference type="ChEBI" id="CHEBI:58210"/>
    </ligand>
</feature>
<gene>
    <name evidence="1" type="primary">pyrD</name>
    <name type="ordered locus">YPA_0710</name>
</gene>
<organism>
    <name type="scientific">Yersinia pestis bv. Antiqua (strain Antiqua)</name>
    <dbReference type="NCBI Taxonomy" id="360102"/>
    <lineage>
        <taxon>Bacteria</taxon>
        <taxon>Pseudomonadati</taxon>
        <taxon>Pseudomonadota</taxon>
        <taxon>Gammaproteobacteria</taxon>
        <taxon>Enterobacterales</taxon>
        <taxon>Yersiniaceae</taxon>
        <taxon>Yersinia</taxon>
    </lineage>
</organism>
<accession>Q1CA44</accession>
<dbReference type="EC" id="1.3.5.2" evidence="1"/>
<dbReference type="EMBL" id="CP000308">
    <property type="protein sequence ID" value="ABG12678.1"/>
    <property type="molecule type" value="Genomic_DNA"/>
</dbReference>
<dbReference type="RefSeq" id="WP_002211296.1">
    <property type="nucleotide sequence ID" value="NZ_CP009906.1"/>
</dbReference>
<dbReference type="SMR" id="Q1CA44"/>
<dbReference type="GeneID" id="57977211"/>
<dbReference type="KEGG" id="ypa:YPA_0710"/>
<dbReference type="UniPathway" id="UPA00070">
    <property type="reaction ID" value="UER00946"/>
</dbReference>
<dbReference type="Proteomes" id="UP000001971">
    <property type="component" value="Chromosome"/>
</dbReference>
<dbReference type="GO" id="GO:0005737">
    <property type="term" value="C:cytoplasm"/>
    <property type="evidence" value="ECO:0007669"/>
    <property type="project" value="InterPro"/>
</dbReference>
<dbReference type="GO" id="GO:0005886">
    <property type="term" value="C:plasma membrane"/>
    <property type="evidence" value="ECO:0007669"/>
    <property type="project" value="UniProtKB-SubCell"/>
</dbReference>
<dbReference type="GO" id="GO:0106430">
    <property type="term" value="F:dihydroorotate dehydrogenase (quinone) activity"/>
    <property type="evidence" value="ECO:0007669"/>
    <property type="project" value="UniProtKB-EC"/>
</dbReference>
<dbReference type="GO" id="GO:0006207">
    <property type="term" value="P:'de novo' pyrimidine nucleobase biosynthetic process"/>
    <property type="evidence" value="ECO:0007669"/>
    <property type="project" value="InterPro"/>
</dbReference>
<dbReference type="GO" id="GO:0044205">
    <property type="term" value="P:'de novo' UMP biosynthetic process"/>
    <property type="evidence" value="ECO:0007669"/>
    <property type="project" value="UniProtKB-UniRule"/>
</dbReference>
<dbReference type="CDD" id="cd04738">
    <property type="entry name" value="DHOD_2_like"/>
    <property type="match status" value="1"/>
</dbReference>
<dbReference type="FunFam" id="3.20.20.70:FF:000028">
    <property type="entry name" value="Dihydroorotate dehydrogenase (quinone)"/>
    <property type="match status" value="1"/>
</dbReference>
<dbReference type="Gene3D" id="3.20.20.70">
    <property type="entry name" value="Aldolase class I"/>
    <property type="match status" value="1"/>
</dbReference>
<dbReference type="HAMAP" id="MF_00225">
    <property type="entry name" value="DHO_dh_type2"/>
    <property type="match status" value="1"/>
</dbReference>
<dbReference type="InterPro" id="IPR013785">
    <property type="entry name" value="Aldolase_TIM"/>
</dbReference>
<dbReference type="InterPro" id="IPR050074">
    <property type="entry name" value="DHO_dehydrogenase"/>
</dbReference>
<dbReference type="InterPro" id="IPR012135">
    <property type="entry name" value="Dihydroorotate_DH_1_2"/>
</dbReference>
<dbReference type="InterPro" id="IPR005719">
    <property type="entry name" value="Dihydroorotate_DH_2"/>
</dbReference>
<dbReference type="InterPro" id="IPR005720">
    <property type="entry name" value="Dihydroorotate_DH_cat"/>
</dbReference>
<dbReference type="InterPro" id="IPR001295">
    <property type="entry name" value="Dihydroorotate_DH_CS"/>
</dbReference>
<dbReference type="NCBIfam" id="NF003644">
    <property type="entry name" value="PRK05286.1-1"/>
    <property type="match status" value="1"/>
</dbReference>
<dbReference type="NCBIfam" id="NF003645">
    <property type="entry name" value="PRK05286.1-2"/>
    <property type="match status" value="1"/>
</dbReference>
<dbReference type="NCBIfam" id="NF003646">
    <property type="entry name" value="PRK05286.1-4"/>
    <property type="match status" value="1"/>
</dbReference>
<dbReference type="NCBIfam" id="NF003652">
    <property type="entry name" value="PRK05286.2-5"/>
    <property type="match status" value="1"/>
</dbReference>
<dbReference type="NCBIfam" id="TIGR01036">
    <property type="entry name" value="pyrD_sub2"/>
    <property type="match status" value="1"/>
</dbReference>
<dbReference type="PANTHER" id="PTHR48109:SF4">
    <property type="entry name" value="DIHYDROOROTATE DEHYDROGENASE (QUINONE), MITOCHONDRIAL"/>
    <property type="match status" value="1"/>
</dbReference>
<dbReference type="PANTHER" id="PTHR48109">
    <property type="entry name" value="DIHYDROOROTATE DEHYDROGENASE (QUINONE), MITOCHONDRIAL-RELATED"/>
    <property type="match status" value="1"/>
</dbReference>
<dbReference type="Pfam" id="PF01180">
    <property type="entry name" value="DHO_dh"/>
    <property type="match status" value="1"/>
</dbReference>
<dbReference type="PIRSF" id="PIRSF000164">
    <property type="entry name" value="DHO_oxidase"/>
    <property type="match status" value="1"/>
</dbReference>
<dbReference type="SUPFAM" id="SSF51395">
    <property type="entry name" value="FMN-linked oxidoreductases"/>
    <property type="match status" value="1"/>
</dbReference>
<dbReference type="PROSITE" id="PS00911">
    <property type="entry name" value="DHODEHASE_1"/>
    <property type="match status" value="1"/>
</dbReference>
<dbReference type="PROSITE" id="PS00912">
    <property type="entry name" value="DHODEHASE_2"/>
    <property type="match status" value="1"/>
</dbReference>
<protein>
    <recommendedName>
        <fullName evidence="1">Dihydroorotate dehydrogenase (quinone)</fullName>
        <ecNumber evidence="1">1.3.5.2</ecNumber>
    </recommendedName>
    <alternativeName>
        <fullName evidence="1">DHOdehase</fullName>
        <shortName evidence="1">DHOD</shortName>
        <shortName evidence="1">DHODase</shortName>
    </alternativeName>
    <alternativeName>
        <fullName evidence="1">Dihydroorotate oxidase</fullName>
    </alternativeName>
</protein>
<name>PYRD_YERPA</name>
<evidence type="ECO:0000255" key="1">
    <source>
        <dbReference type="HAMAP-Rule" id="MF_00225"/>
    </source>
</evidence>
<reference key="1">
    <citation type="journal article" date="2006" name="J. Bacteriol.">
        <title>Complete genome sequence of Yersinia pestis strains Antiqua and Nepal516: evidence of gene reduction in an emerging pathogen.</title>
        <authorList>
            <person name="Chain P.S.G."/>
            <person name="Hu P."/>
            <person name="Malfatti S.A."/>
            <person name="Radnedge L."/>
            <person name="Larimer F."/>
            <person name="Vergez L.M."/>
            <person name="Worsham P."/>
            <person name="Chu M.C."/>
            <person name="Andersen G.L."/>
        </authorList>
    </citation>
    <scope>NUCLEOTIDE SEQUENCE [LARGE SCALE GENOMIC DNA]</scope>
    <source>
        <strain>Antiqua</strain>
    </source>
</reference>